<proteinExistence type="inferred from homology"/>
<protein>
    <recommendedName>
        <fullName evidence="1">Putative antitoxin VapB2</fullName>
    </recommendedName>
</protein>
<accession>Q9V1M3</accession>
<accession>G8ZGA3</accession>
<keyword id="KW-1277">Toxin-antitoxin system</keyword>
<gene>
    <name type="primary">vapB2</name>
    <name type="ordered locus">PYRAB04040</name>
    <name type="ORF">PAB3103</name>
</gene>
<name>VAPB2_PYRAB</name>
<comment type="function">
    <text evidence="1">Possibly the antitoxin component of a type II toxin-antitoxin (TA) system. Its cognate toxin is VapC2 (Potential).</text>
</comment>
<comment type="similarity">
    <text evidence="1">Belongs to the UPF0330 family.</text>
</comment>
<comment type="sequence caution" evidence="2">
    <conflict type="erroneous initiation">
        <sequence resource="EMBL-CDS" id="CAB49326"/>
    </conflict>
    <text>Extended N-terminus.</text>
</comment>
<dbReference type="EMBL" id="AJ248284">
    <property type="protein sequence ID" value="CAB49326.1"/>
    <property type="status" value="ALT_INIT"/>
    <property type="molecule type" value="Genomic_DNA"/>
</dbReference>
<dbReference type="EMBL" id="HE613800">
    <property type="protein sequence ID" value="CCE69782.1"/>
    <property type="molecule type" value="Genomic_DNA"/>
</dbReference>
<dbReference type="PIR" id="G75155">
    <property type="entry name" value="G75155"/>
</dbReference>
<dbReference type="RefSeq" id="WP_048146550.1">
    <property type="nucleotide sequence ID" value="NC_000868.1"/>
</dbReference>
<dbReference type="KEGG" id="pab:PAB3103"/>
<dbReference type="PATRIC" id="fig|272844.11.peg.423"/>
<dbReference type="eggNOG" id="arCOG02681">
    <property type="taxonomic scope" value="Archaea"/>
</dbReference>
<dbReference type="HOGENOM" id="CLU_170073_3_0_2"/>
<dbReference type="OrthoDB" id="85981at2157"/>
<dbReference type="Proteomes" id="UP000000810">
    <property type="component" value="Chromosome"/>
</dbReference>
<dbReference type="Proteomes" id="UP000009139">
    <property type="component" value="Chromosome"/>
</dbReference>
<dbReference type="HAMAP" id="MF_00794">
    <property type="entry name" value="UPF0330"/>
    <property type="match status" value="1"/>
</dbReference>
<dbReference type="InterPro" id="IPR003847">
    <property type="entry name" value="Put_antitoxin"/>
</dbReference>
<dbReference type="NCBIfam" id="NF010250">
    <property type="entry name" value="PRK13696.1-2"/>
    <property type="match status" value="1"/>
</dbReference>
<dbReference type="Pfam" id="PF02697">
    <property type="entry name" value="VAPB_antitox"/>
    <property type="match status" value="1"/>
</dbReference>
<feature type="chain" id="PRO_0000157110" description="Putative antitoxin VapB2">
    <location>
        <begin position="1"/>
        <end position="76"/>
    </location>
</feature>
<evidence type="ECO:0000255" key="1">
    <source>
        <dbReference type="HAMAP-Rule" id="MF_00794"/>
    </source>
</evidence>
<evidence type="ECO:0000305" key="2"/>
<organism>
    <name type="scientific">Pyrococcus abyssi (strain GE5 / Orsay)</name>
    <dbReference type="NCBI Taxonomy" id="272844"/>
    <lineage>
        <taxon>Archaea</taxon>
        <taxon>Methanobacteriati</taxon>
        <taxon>Methanobacteriota</taxon>
        <taxon>Thermococci</taxon>
        <taxon>Thermococcales</taxon>
        <taxon>Thermococcaceae</taxon>
        <taxon>Pyrococcus</taxon>
    </lineage>
</organism>
<reference key="1">
    <citation type="journal article" date="2003" name="Mol. Microbiol.">
        <title>An integrated analysis of the genome of the hyperthermophilic archaeon Pyrococcus abyssi.</title>
        <authorList>
            <person name="Cohen G.N."/>
            <person name="Barbe V."/>
            <person name="Flament D."/>
            <person name="Galperin M."/>
            <person name="Heilig R."/>
            <person name="Lecompte O."/>
            <person name="Poch O."/>
            <person name="Prieur D."/>
            <person name="Querellou J."/>
            <person name="Ripp R."/>
            <person name="Thierry J.-C."/>
            <person name="Van der Oost J."/>
            <person name="Weissenbach J."/>
            <person name="Zivanovic Y."/>
            <person name="Forterre P."/>
        </authorList>
    </citation>
    <scope>NUCLEOTIDE SEQUENCE [LARGE SCALE GENOMIC DNA]</scope>
    <source>
        <strain>GE5 / Orsay</strain>
    </source>
</reference>
<reference key="2">
    <citation type="journal article" date="2012" name="Curr. Microbiol.">
        <title>Re-annotation of two hyperthermophilic archaea Pyrococcus abyssi GE5 and Pyrococcus furiosus DSM 3638.</title>
        <authorList>
            <person name="Gao J."/>
            <person name="Wang J."/>
        </authorList>
    </citation>
    <scope>GENOME REANNOTATION</scope>
    <source>
        <strain>GE5 / Orsay</strain>
    </source>
</reference>
<reference key="3">
    <citation type="journal article" date="2005" name="Nucleic Acids Res.">
        <title>Toxin-antitoxin loci are highly abundant in free-living but lost from host-associated prokaryotes.</title>
        <authorList>
            <person name="Pandey D.P."/>
            <person name="Gerdes K."/>
        </authorList>
    </citation>
    <scope>POSSIBLE FUNCTION</scope>
    <source>
        <strain>GE5 / Orsay</strain>
    </source>
</reference>
<sequence length="76" mass="8845">MSKTITIADDVYYELVKMKGNKSFSELLRELIGKKKKGNLDILMIAFGTMSEEEVKEFKKKIKEVEEWINSWTPVS</sequence>